<feature type="chain" id="PRO_0000137857" description="Argininosuccinate lyase">
    <location>
        <begin position="1"/>
        <end position="468"/>
    </location>
</feature>
<feature type="sequence conflict" description="In Ref. 1; AAD19417." evidence="2" ref="1">
    <original>A</original>
    <variation>S</variation>
    <location>
        <position position="228"/>
    </location>
</feature>
<dbReference type="EC" id="4.3.2.1" evidence="1"/>
<dbReference type="EMBL" id="AF102543">
    <property type="protein sequence ID" value="AAD19417.1"/>
    <property type="molecule type" value="Genomic_DNA"/>
</dbReference>
<dbReference type="EMBL" id="AE008692">
    <property type="protein sequence ID" value="AAV90394.1"/>
    <property type="molecule type" value="Genomic_DNA"/>
</dbReference>
<dbReference type="SMR" id="Q9Z660"/>
<dbReference type="STRING" id="264203.ZMO1770"/>
<dbReference type="KEGG" id="zmo:ZMO1770"/>
<dbReference type="eggNOG" id="COG0165">
    <property type="taxonomic scope" value="Bacteria"/>
</dbReference>
<dbReference type="HOGENOM" id="CLU_027272_2_3_5"/>
<dbReference type="UniPathway" id="UPA00068">
    <property type="reaction ID" value="UER00114"/>
</dbReference>
<dbReference type="Proteomes" id="UP000001173">
    <property type="component" value="Chromosome"/>
</dbReference>
<dbReference type="GO" id="GO:0005829">
    <property type="term" value="C:cytosol"/>
    <property type="evidence" value="ECO:0007669"/>
    <property type="project" value="TreeGrafter"/>
</dbReference>
<dbReference type="GO" id="GO:0004056">
    <property type="term" value="F:argininosuccinate lyase activity"/>
    <property type="evidence" value="ECO:0007669"/>
    <property type="project" value="UniProtKB-UniRule"/>
</dbReference>
<dbReference type="GO" id="GO:0042450">
    <property type="term" value="P:arginine biosynthetic process via ornithine"/>
    <property type="evidence" value="ECO:0007669"/>
    <property type="project" value="InterPro"/>
</dbReference>
<dbReference type="GO" id="GO:0006526">
    <property type="term" value="P:L-arginine biosynthetic process"/>
    <property type="evidence" value="ECO:0007669"/>
    <property type="project" value="UniProtKB-UniRule"/>
</dbReference>
<dbReference type="CDD" id="cd01359">
    <property type="entry name" value="Argininosuccinate_lyase"/>
    <property type="match status" value="1"/>
</dbReference>
<dbReference type="FunFam" id="1.10.275.10:FF:000002">
    <property type="entry name" value="Argininosuccinate lyase"/>
    <property type="match status" value="1"/>
</dbReference>
<dbReference type="FunFam" id="1.10.40.30:FF:000001">
    <property type="entry name" value="Argininosuccinate lyase"/>
    <property type="match status" value="1"/>
</dbReference>
<dbReference type="FunFam" id="1.20.200.10:FF:000015">
    <property type="entry name" value="argininosuccinate lyase isoform X2"/>
    <property type="match status" value="1"/>
</dbReference>
<dbReference type="Gene3D" id="1.10.40.30">
    <property type="entry name" value="Fumarase/aspartase (C-terminal domain)"/>
    <property type="match status" value="1"/>
</dbReference>
<dbReference type="Gene3D" id="1.20.200.10">
    <property type="entry name" value="Fumarase/aspartase (Central domain)"/>
    <property type="match status" value="1"/>
</dbReference>
<dbReference type="Gene3D" id="1.10.275.10">
    <property type="entry name" value="Fumarase/aspartase (N-terminal domain)"/>
    <property type="match status" value="1"/>
</dbReference>
<dbReference type="HAMAP" id="MF_00006">
    <property type="entry name" value="Arg_succ_lyase"/>
    <property type="match status" value="1"/>
</dbReference>
<dbReference type="InterPro" id="IPR029419">
    <property type="entry name" value="Arg_succ_lyase_C"/>
</dbReference>
<dbReference type="InterPro" id="IPR009049">
    <property type="entry name" value="Argininosuccinate_lyase"/>
</dbReference>
<dbReference type="InterPro" id="IPR024083">
    <property type="entry name" value="Fumarase/histidase_N"/>
</dbReference>
<dbReference type="InterPro" id="IPR020557">
    <property type="entry name" value="Fumarate_lyase_CS"/>
</dbReference>
<dbReference type="InterPro" id="IPR000362">
    <property type="entry name" value="Fumarate_lyase_fam"/>
</dbReference>
<dbReference type="InterPro" id="IPR022761">
    <property type="entry name" value="Fumarate_lyase_N"/>
</dbReference>
<dbReference type="InterPro" id="IPR008948">
    <property type="entry name" value="L-Aspartase-like"/>
</dbReference>
<dbReference type="NCBIfam" id="TIGR00838">
    <property type="entry name" value="argH"/>
    <property type="match status" value="1"/>
</dbReference>
<dbReference type="PANTHER" id="PTHR43814">
    <property type="entry name" value="ARGININOSUCCINATE LYASE"/>
    <property type="match status" value="1"/>
</dbReference>
<dbReference type="PANTHER" id="PTHR43814:SF1">
    <property type="entry name" value="ARGININOSUCCINATE LYASE"/>
    <property type="match status" value="1"/>
</dbReference>
<dbReference type="Pfam" id="PF14698">
    <property type="entry name" value="ASL_C2"/>
    <property type="match status" value="1"/>
</dbReference>
<dbReference type="Pfam" id="PF00206">
    <property type="entry name" value="Lyase_1"/>
    <property type="match status" value="1"/>
</dbReference>
<dbReference type="PRINTS" id="PR00145">
    <property type="entry name" value="ARGSUCLYASE"/>
</dbReference>
<dbReference type="PRINTS" id="PR00149">
    <property type="entry name" value="FUMRATELYASE"/>
</dbReference>
<dbReference type="SUPFAM" id="SSF48557">
    <property type="entry name" value="L-aspartase-like"/>
    <property type="match status" value="1"/>
</dbReference>
<dbReference type="PROSITE" id="PS00163">
    <property type="entry name" value="FUMARATE_LYASES"/>
    <property type="match status" value="1"/>
</dbReference>
<organism>
    <name type="scientific">Zymomonas mobilis subsp. mobilis (strain ATCC 31821 / ZM4 / CP4)</name>
    <dbReference type="NCBI Taxonomy" id="264203"/>
    <lineage>
        <taxon>Bacteria</taxon>
        <taxon>Pseudomonadati</taxon>
        <taxon>Pseudomonadota</taxon>
        <taxon>Alphaproteobacteria</taxon>
        <taxon>Sphingomonadales</taxon>
        <taxon>Zymomonadaceae</taxon>
        <taxon>Zymomonas</taxon>
    </lineage>
</organism>
<keyword id="KW-0028">Amino-acid biosynthesis</keyword>
<keyword id="KW-0055">Arginine biosynthesis</keyword>
<keyword id="KW-0963">Cytoplasm</keyword>
<keyword id="KW-0456">Lyase</keyword>
<keyword id="KW-1185">Reference proteome</keyword>
<proteinExistence type="inferred from homology"/>
<gene>
    <name evidence="1" type="primary">argH</name>
    <name type="ordered locus">ZMO1770</name>
</gene>
<name>ARLY_ZYMMO</name>
<sequence length="468" mass="51079">MITERQTDSNAMWGGRFSEGPTAIMREINASIPFDKRLWQQDIAGSKAHLKMLVSRNIITAEDGQKILEGLDKIAAEYAEKGVPEDWSLEDIHMVTEKRLADLIGSAAGRLHTARSRNDQVATDFKLWVRDAIDMVDKGLTALQTALVIRAEEHAATVMPGFTHLQIAQPITLGHHLMAYYEMISRDRSRFSDGRKRLNQSPLGAAALAGTGFNIDRHQTAKALGFDAPTANSLDSVSDRDFALDYLMSATQTAIHLSRLAEEIIIWASQPYGFVSLPDAYSTGSSIMPQKRNPDAAELVRGHSGRIAGCMNALVMTMKGLPLAYSKDMQDDKPPVFEAHDLLSLAIAAMTGMIETLTFIPEKMRKTAEAGFSTATDLADWLVRQAGIPFREAHHITGSAVRLAETKGIALDALSIEDLKAIDPRIDESVKAVLSVDASVASRNSYGGTAPDQVRARILDAKKTLGLN</sequence>
<reference key="1">
    <citation type="submission" date="1998-10" db="EMBL/GenBank/DDBJ databases">
        <authorList>
            <person name="Um H.W."/>
            <person name="Kang H.S."/>
        </authorList>
    </citation>
    <scope>NUCLEOTIDE SEQUENCE [GENOMIC DNA]</scope>
    <source>
        <strain>ATCC 31821 / ZM4 / CP4</strain>
    </source>
</reference>
<reference key="2">
    <citation type="journal article" date="2005" name="Nat. Biotechnol.">
        <title>The genome sequence of the ethanologenic bacterium Zymomonas mobilis ZM4.</title>
        <authorList>
            <person name="Seo J.-S."/>
            <person name="Chong H."/>
            <person name="Park H.S."/>
            <person name="Yoon K.-O."/>
            <person name="Jung C."/>
            <person name="Kim J.J."/>
            <person name="Hong J.H."/>
            <person name="Kim H."/>
            <person name="Kim J.-H."/>
            <person name="Kil J.-I."/>
            <person name="Park C.J."/>
            <person name="Oh H.-M."/>
            <person name="Lee J.-S."/>
            <person name="Jin S.-J."/>
            <person name="Um H.-W."/>
            <person name="Lee H.-J."/>
            <person name="Oh S.-J."/>
            <person name="Kim J.Y."/>
            <person name="Kang H.L."/>
            <person name="Lee S.Y."/>
            <person name="Lee K.J."/>
            <person name="Kang H.S."/>
        </authorList>
    </citation>
    <scope>NUCLEOTIDE SEQUENCE [LARGE SCALE GENOMIC DNA]</scope>
    <source>
        <strain>ATCC 31821 / ZM4 / CP4</strain>
    </source>
</reference>
<accession>Q9Z660</accession>
<accession>Q5NLL6</accession>
<protein>
    <recommendedName>
        <fullName evidence="1">Argininosuccinate lyase</fullName>
        <shortName evidence="1">ASAL</shortName>
        <ecNumber evidence="1">4.3.2.1</ecNumber>
    </recommendedName>
    <alternativeName>
        <fullName evidence="1">Arginosuccinase</fullName>
    </alternativeName>
</protein>
<evidence type="ECO:0000255" key="1">
    <source>
        <dbReference type="HAMAP-Rule" id="MF_00006"/>
    </source>
</evidence>
<evidence type="ECO:0000305" key="2"/>
<comment type="catalytic activity">
    <reaction evidence="1">
        <text>2-(N(omega)-L-arginino)succinate = fumarate + L-arginine</text>
        <dbReference type="Rhea" id="RHEA:24020"/>
        <dbReference type="ChEBI" id="CHEBI:29806"/>
        <dbReference type="ChEBI" id="CHEBI:32682"/>
        <dbReference type="ChEBI" id="CHEBI:57472"/>
        <dbReference type="EC" id="4.3.2.1"/>
    </reaction>
</comment>
<comment type="pathway">
    <text evidence="1">Amino-acid biosynthesis; L-arginine biosynthesis; L-arginine from L-ornithine and carbamoyl phosphate: step 3/3.</text>
</comment>
<comment type="subcellular location">
    <subcellularLocation>
        <location evidence="1">Cytoplasm</location>
    </subcellularLocation>
</comment>
<comment type="similarity">
    <text evidence="1">Belongs to the lyase 1 family. Argininosuccinate lyase subfamily.</text>
</comment>